<sequence length="610" mass="66361">MSKIIGIDLGTTNSCVTVLEGDEPKVIQNPEGSRTTPSVVAFKNGETQVGEVAKRQAITNPNTVQSIKRHMGTDYKVDIEGKSYTPQEISAMILQNLKNTAESYLGEKVDKAVITVPAYFNDAERQATKDAGKIAGLEVERIINEPTAAALAYGLDKTDKDEKVLVFDLGGGTFDVSILELGDGVFEVLSTAGDNKLGGDDFDQVIIDYLVAEFKKENGVDLSQDKMALQRLKDAAEKAKKDLSGVSQTQISLPFISAGENGPLHLEVNLTRSKFEELSDSLIRRTMEPTRQAMKDAGLTNSDIDEVILVGGSTRIPAVQEAVKKEIGKEPNKGVNPDEVVAMGAAIQGGVITGDVKDVVLLDVTPLSLGIEILGGRMNTLIERNTTIPTSKSQIYSTAVDNQPSVDVHVLQGERPMAADNKTLGRFQLTDIPPAERGKPQIEVTFDIDKNGIVNVTAKDLGTNKEQRITIQSSSSLSDEEIDRMVKDAEVNAEADKKRREEVDLRNEADSLVFQVEKTLTDLGENIGEEDKKSAEEKKDALKTALEGQDIEDIKSKKEELEKVIQELSAKVYEQAAQQQQQAQGANAGQNNDSTVEDAEFKEVKDDDKK</sequence>
<name>DNAK_STAAR</name>
<organism>
    <name type="scientific">Staphylococcus aureus (strain MRSA252)</name>
    <dbReference type="NCBI Taxonomy" id="282458"/>
    <lineage>
        <taxon>Bacteria</taxon>
        <taxon>Bacillati</taxon>
        <taxon>Bacillota</taxon>
        <taxon>Bacilli</taxon>
        <taxon>Bacillales</taxon>
        <taxon>Staphylococcaceae</taxon>
        <taxon>Staphylococcus</taxon>
    </lineage>
</organism>
<protein>
    <recommendedName>
        <fullName evidence="1">Chaperone protein DnaK</fullName>
    </recommendedName>
    <alternativeName>
        <fullName evidence="1">HSP70</fullName>
    </alternativeName>
    <alternativeName>
        <fullName evidence="1">Heat shock 70 kDa protein</fullName>
    </alternativeName>
    <alternativeName>
        <fullName evidence="1">Heat shock protein 70</fullName>
    </alternativeName>
</protein>
<accession>Q6GGC0</accession>
<dbReference type="EMBL" id="BX571856">
    <property type="protein sequence ID" value="CAG40652.1"/>
    <property type="molecule type" value="Genomic_DNA"/>
</dbReference>
<dbReference type="RefSeq" id="WP_000034716.1">
    <property type="nucleotide sequence ID" value="NC_002952.2"/>
</dbReference>
<dbReference type="SMR" id="Q6GGC0"/>
<dbReference type="KEGG" id="sar:SAR1657"/>
<dbReference type="HOGENOM" id="CLU_005965_2_4_9"/>
<dbReference type="Proteomes" id="UP000000596">
    <property type="component" value="Chromosome"/>
</dbReference>
<dbReference type="GO" id="GO:0005524">
    <property type="term" value="F:ATP binding"/>
    <property type="evidence" value="ECO:0007669"/>
    <property type="project" value="UniProtKB-UniRule"/>
</dbReference>
<dbReference type="GO" id="GO:0140662">
    <property type="term" value="F:ATP-dependent protein folding chaperone"/>
    <property type="evidence" value="ECO:0007669"/>
    <property type="project" value="InterPro"/>
</dbReference>
<dbReference type="GO" id="GO:0051082">
    <property type="term" value="F:unfolded protein binding"/>
    <property type="evidence" value="ECO:0007669"/>
    <property type="project" value="InterPro"/>
</dbReference>
<dbReference type="CDD" id="cd10234">
    <property type="entry name" value="ASKHA_NBD_HSP70_DnaK-like"/>
    <property type="match status" value="1"/>
</dbReference>
<dbReference type="FunFam" id="2.60.34.10:FF:000014">
    <property type="entry name" value="Chaperone protein DnaK HSP70"/>
    <property type="match status" value="1"/>
</dbReference>
<dbReference type="FunFam" id="1.20.1270.10:FF:000001">
    <property type="entry name" value="Molecular chaperone DnaK"/>
    <property type="match status" value="1"/>
</dbReference>
<dbReference type="FunFam" id="3.30.420.40:FF:000071">
    <property type="entry name" value="Molecular chaperone DnaK"/>
    <property type="match status" value="1"/>
</dbReference>
<dbReference type="FunFam" id="3.90.640.10:FF:000003">
    <property type="entry name" value="Molecular chaperone DnaK"/>
    <property type="match status" value="1"/>
</dbReference>
<dbReference type="Gene3D" id="1.20.1270.10">
    <property type="match status" value="1"/>
</dbReference>
<dbReference type="Gene3D" id="3.30.420.40">
    <property type="match status" value="2"/>
</dbReference>
<dbReference type="Gene3D" id="3.90.640.10">
    <property type="entry name" value="Actin, Chain A, domain 4"/>
    <property type="match status" value="1"/>
</dbReference>
<dbReference type="Gene3D" id="2.60.34.10">
    <property type="entry name" value="Substrate Binding Domain Of DNAk, Chain A, domain 1"/>
    <property type="match status" value="1"/>
</dbReference>
<dbReference type="HAMAP" id="MF_00332">
    <property type="entry name" value="DnaK"/>
    <property type="match status" value="1"/>
</dbReference>
<dbReference type="InterPro" id="IPR043129">
    <property type="entry name" value="ATPase_NBD"/>
</dbReference>
<dbReference type="InterPro" id="IPR012725">
    <property type="entry name" value="Chaperone_DnaK"/>
</dbReference>
<dbReference type="InterPro" id="IPR018181">
    <property type="entry name" value="Heat_shock_70_CS"/>
</dbReference>
<dbReference type="InterPro" id="IPR029048">
    <property type="entry name" value="HSP70_C_sf"/>
</dbReference>
<dbReference type="InterPro" id="IPR029047">
    <property type="entry name" value="HSP70_peptide-bd_sf"/>
</dbReference>
<dbReference type="InterPro" id="IPR013126">
    <property type="entry name" value="Hsp_70_fam"/>
</dbReference>
<dbReference type="NCBIfam" id="NF001413">
    <property type="entry name" value="PRK00290.1"/>
    <property type="match status" value="1"/>
</dbReference>
<dbReference type="NCBIfam" id="TIGR02350">
    <property type="entry name" value="prok_dnaK"/>
    <property type="match status" value="1"/>
</dbReference>
<dbReference type="PANTHER" id="PTHR19375">
    <property type="entry name" value="HEAT SHOCK PROTEIN 70KDA"/>
    <property type="match status" value="1"/>
</dbReference>
<dbReference type="Pfam" id="PF00012">
    <property type="entry name" value="HSP70"/>
    <property type="match status" value="1"/>
</dbReference>
<dbReference type="PRINTS" id="PR00301">
    <property type="entry name" value="HEATSHOCK70"/>
</dbReference>
<dbReference type="SUPFAM" id="SSF53067">
    <property type="entry name" value="Actin-like ATPase domain"/>
    <property type="match status" value="2"/>
</dbReference>
<dbReference type="SUPFAM" id="SSF100934">
    <property type="entry name" value="Heat shock protein 70kD (HSP70), C-terminal subdomain"/>
    <property type="match status" value="1"/>
</dbReference>
<dbReference type="SUPFAM" id="SSF100920">
    <property type="entry name" value="Heat shock protein 70kD (HSP70), peptide-binding domain"/>
    <property type="match status" value="1"/>
</dbReference>
<dbReference type="PROSITE" id="PS00297">
    <property type="entry name" value="HSP70_1"/>
    <property type="match status" value="1"/>
</dbReference>
<dbReference type="PROSITE" id="PS00329">
    <property type="entry name" value="HSP70_2"/>
    <property type="match status" value="1"/>
</dbReference>
<dbReference type="PROSITE" id="PS01036">
    <property type="entry name" value="HSP70_3"/>
    <property type="match status" value="1"/>
</dbReference>
<keyword id="KW-0067">ATP-binding</keyword>
<keyword id="KW-0143">Chaperone</keyword>
<keyword id="KW-0547">Nucleotide-binding</keyword>
<keyword id="KW-0597">Phosphoprotein</keyword>
<keyword id="KW-0346">Stress response</keyword>
<comment type="function">
    <text evidence="1">Acts as a chaperone.</text>
</comment>
<comment type="induction">
    <text evidence="1">By stress conditions e.g. heat shock.</text>
</comment>
<comment type="similarity">
    <text evidence="1">Belongs to the heat shock protein 70 family.</text>
</comment>
<reference key="1">
    <citation type="journal article" date="2004" name="Proc. Natl. Acad. Sci. U.S.A.">
        <title>Complete genomes of two clinical Staphylococcus aureus strains: evidence for the rapid evolution of virulence and drug resistance.</title>
        <authorList>
            <person name="Holden M.T.G."/>
            <person name="Feil E.J."/>
            <person name="Lindsay J.A."/>
            <person name="Peacock S.J."/>
            <person name="Day N.P.J."/>
            <person name="Enright M.C."/>
            <person name="Foster T.J."/>
            <person name="Moore C.E."/>
            <person name="Hurst L."/>
            <person name="Atkin R."/>
            <person name="Barron A."/>
            <person name="Bason N."/>
            <person name="Bentley S.D."/>
            <person name="Chillingworth C."/>
            <person name="Chillingworth T."/>
            <person name="Churcher C."/>
            <person name="Clark L."/>
            <person name="Corton C."/>
            <person name="Cronin A."/>
            <person name="Doggett J."/>
            <person name="Dowd L."/>
            <person name="Feltwell T."/>
            <person name="Hance Z."/>
            <person name="Harris B."/>
            <person name="Hauser H."/>
            <person name="Holroyd S."/>
            <person name="Jagels K."/>
            <person name="James K.D."/>
            <person name="Lennard N."/>
            <person name="Line A."/>
            <person name="Mayes R."/>
            <person name="Moule S."/>
            <person name="Mungall K."/>
            <person name="Ormond D."/>
            <person name="Quail M.A."/>
            <person name="Rabbinowitsch E."/>
            <person name="Rutherford K.M."/>
            <person name="Sanders M."/>
            <person name="Sharp S."/>
            <person name="Simmonds M."/>
            <person name="Stevens K."/>
            <person name="Whitehead S."/>
            <person name="Barrell B.G."/>
            <person name="Spratt B.G."/>
            <person name="Parkhill J."/>
        </authorList>
    </citation>
    <scope>NUCLEOTIDE SEQUENCE [LARGE SCALE GENOMIC DNA]</scope>
    <source>
        <strain>MRSA252</strain>
    </source>
</reference>
<evidence type="ECO:0000255" key="1">
    <source>
        <dbReference type="HAMAP-Rule" id="MF_00332"/>
    </source>
</evidence>
<evidence type="ECO:0000256" key="2">
    <source>
        <dbReference type="SAM" id="MobiDB-lite"/>
    </source>
</evidence>
<proteinExistence type="inferred from homology"/>
<gene>
    <name evidence="1" type="primary">dnaK</name>
    <name type="ordered locus">SAR1657</name>
</gene>
<feature type="chain" id="PRO_0000078539" description="Chaperone protein DnaK">
    <location>
        <begin position="1"/>
        <end position="610"/>
    </location>
</feature>
<feature type="region of interest" description="Disordered" evidence="2">
    <location>
        <begin position="525"/>
        <end position="544"/>
    </location>
</feature>
<feature type="region of interest" description="Disordered" evidence="2">
    <location>
        <begin position="576"/>
        <end position="610"/>
    </location>
</feature>
<feature type="compositionally biased region" description="Basic and acidic residues" evidence="2">
    <location>
        <begin position="529"/>
        <end position="542"/>
    </location>
</feature>
<feature type="compositionally biased region" description="Low complexity" evidence="2">
    <location>
        <begin position="576"/>
        <end position="592"/>
    </location>
</feature>
<feature type="compositionally biased region" description="Basic and acidic residues" evidence="2">
    <location>
        <begin position="599"/>
        <end position="610"/>
    </location>
</feature>
<feature type="modified residue" description="Phosphothreonine; by autocatalysis" evidence="1">
    <location>
        <position position="173"/>
    </location>
</feature>